<feature type="initiator methionine" description="Removed" evidence="2">
    <location>
        <position position="1"/>
    </location>
</feature>
<feature type="chain" id="PRO_0000207469" description="ADP-ribosylation factor-like protein 5A">
    <location>
        <begin position="2"/>
        <end position="179"/>
    </location>
</feature>
<feature type="binding site" evidence="1">
    <location>
        <begin position="23"/>
        <end position="30"/>
    </location>
    <ligand>
        <name>GTP</name>
        <dbReference type="ChEBI" id="CHEBI:37565"/>
    </ligand>
</feature>
<feature type="binding site" evidence="1">
    <location>
        <begin position="66"/>
        <end position="70"/>
    </location>
    <ligand>
        <name>GTP</name>
        <dbReference type="ChEBI" id="CHEBI:37565"/>
    </ligand>
</feature>
<feature type="binding site" evidence="1">
    <location>
        <begin position="125"/>
        <end position="128"/>
    </location>
    <ligand>
        <name>GTP</name>
        <dbReference type="ChEBI" id="CHEBI:37565"/>
    </ligand>
</feature>
<feature type="binding site" evidence="1">
    <location>
        <position position="159"/>
    </location>
    <ligand>
        <name>GTP</name>
        <dbReference type="ChEBI" id="CHEBI:37565"/>
    </ligand>
</feature>
<feature type="lipid moiety-binding region" description="N-myristoyl glycine" evidence="2">
    <location>
        <position position="2"/>
    </location>
</feature>
<reference key="1">
    <citation type="journal article" date="1996" name="Biochim. Biophys. Acta">
        <title>Cloning of a novel member (ARL5) of the ARF-family of Ras-related GTPases.</title>
        <authorList>
            <person name="Breiner M."/>
            <person name="Schuermann A."/>
            <person name="Becker W."/>
            <person name="Joost H.-G."/>
        </authorList>
    </citation>
    <scope>NUCLEOTIDE SEQUENCE [MRNA]</scope>
    <source>
        <strain>Sprague-Dawley</strain>
        <tissue>Adipose tissue</tissue>
    </source>
</reference>
<reference key="2">
    <citation type="journal article" date="2004" name="Genome Res.">
        <title>The status, quality, and expansion of the NIH full-length cDNA project: the Mammalian Gene Collection (MGC).</title>
        <authorList>
            <consortium name="The MGC Project Team"/>
        </authorList>
    </citation>
    <scope>NUCLEOTIDE SEQUENCE [LARGE SCALE MRNA]</scope>
    <source>
        <tissue>Placenta</tissue>
    </source>
</reference>
<protein>
    <recommendedName>
        <fullName>ADP-ribosylation factor-like protein 5A</fullName>
    </recommendedName>
</protein>
<proteinExistence type="evidence at transcript level"/>
<sequence length="179" mass="20714">MGILFTRIWRLFNHQEHKVIIVGLDNAGKTTILYQFSMNEVVHTSPTIGSNVEEIVVNNTRFLMWDIGGQESLRSSWNTYYTNTEFVIVVVDSTDRERISVTREELYKMLAHEDLRKAGLLIFANKQDVKECMTVAEISQFLKLTSIKDHQWHIQACCALTGEGLCQGLEWMMSRLKIR</sequence>
<comment type="function">
    <text>Lacks ADP-ribosylation enhancing activity.</text>
</comment>
<comment type="tissue specificity">
    <text>Low amounts were found in most tissues examined with highest levels in brain, intestine and thymus.</text>
</comment>
<comment type="similarity">
    <text evidence="3">Belongs to the small GTPase superfamily. Arf family.</text>
</comment>
<keyword id="KW-0342">GTP-binding</keyword>
<keyword id="KW-0449">Lipoprotein</keyword>
<keyword id="KW-0519">Myristate</keyword>
<keyword id="KW-0547">Nucleotide-binding</keyword>
<keyword id="KW-1185">Reference proteome</keyword>
<organism>
    <name type="scientific">Rattus norvegicus</name>
    <name type="common">Rat</name>
    <dbReference type="NCBI Taxonomy" id="10116"/>
    <lineage>
        <taxon>Eukaryota</taxon>
        <taxon>Metazoa</taxon>
        <taxon>Chordata</taxon>
        <taxon>Craniata</taxon>
        <taxon>Vertebrata</taxon>
        <taxon>Euteleostomi</taxon>
        <taxon>Mammalia</taxon>
        <taxon>Eutheria</taxon>
        <taxon>Euarchontoglires</taxon>
        <taxon>Glires</taxon>
        <taxon>Rodentia</taxon>
        <taxon>Myomorpha</taxon>
        <taxon>Muroidea</taxon>
        <taxon>Muridae</taxon>
        <taxon>Murinae</taxon>
        <taxon>Rattus</taxon>
    </lineage>
</organism>
<name>ARL5A_RAT</name>
<evidence type="ECO:0000250" key="1"/>
<evidence type="ECO:0000255" key="2"/>
<evidence type="ECO:0000305" key="3"/>
<gene>
    <name type="primary">Arl5a</name>
    <name type="synonym">Arl5</name>
</gene>
<accession>P51646</accession>
<accession>Q4V8N2</accession>
<dbReference type="EMBL" id="X78604">
    <property type="protein sequence ID" value="CAA55338.1"/>
    <property type="molecule type" value="mRNA"/>
</dbReference>
<dbReference type="EMBL" id="BC097294">
    <property type="protein sequence ID" value="AAH97294.1"/>
    <property type="molecule type" value="mRNA"/>
</dbReference>
<dbReference type="PIR" id="S72161">
    <property type="entry name" value="S72161"/>
</dbReference>
<dbReference type="RefSeq" id="NP_446431.1">
    <property type="nucleotide sequence ID" value="NM_053979.2"/>
</dbReference>
<dbReference type="SMR" id="P51646"/>
<dbReference type="FunCoup" id="P51646">
    <property type="interactions" value="3647"/>
</dbReference>
<dbReference type="STRING" id="10116.ENSRNOP00000009181"/>
<dbReference type="PhosphoSitePlus" id="P51646"/>
<dbReference type="PaxDb" id="10116-ENSRNOP00000009181"/>
<dbReference type="Ensembl" id="ENSRNOT00000009181.3">
    <property type="protein sequence ID" value="ENSRNOP00000009181.1"/>
    <property type="gene ID" value="ENSRNOG00000006839.4"/>
</dbReference>
<dbReference type="GeneID" id="117050"/>
<dbReference type="KEGG" id="rno:117050"/>
<dbReference type="UCSC" id="RGD:621327">
    <property type="organism name" value="rat"/>
</dbReference>
<dbReference type="AGR" id="RGD:621327"/>
<dbReference type="CTD" id="26225"/>
<dbReference type="RGD" id="621327">
    <property type="gene designation" value="Arl5a"/>
</dbReference>
<dbReference type="eggNOG" id="KOG0070">
    <property type="taxonomic scope" value="Eukaryota"/>
</dbReference>
<dbReference type="GeneTree" id="ENSGT00940000154714"/>
<dbReference type="HOGENOM" id="CLU_040729_9_1_1"/>
<dbReference type="InParanoid" id="P51646"/>
<dbReference type="OMA" id="ILFARIW"/>
<dbReference type="OrthoDB" id="2011769at2759"/>
<dbReference type="PhylomeDB" id="P51646"/>
<dbReference type="TreeFam" id="TF105465"/>
<dbReference type="PRO" id="PR:P51646"/>
<dbReference type="Proteomes" id="UP000002494">
    <property type="component" value="Chromosome 3"/>
</dbReference>
<dbReference type="Bgee" id="ENSRNOG00000006839">
    <property type="expression patterns" value="Expressed in jejunum and 19 other cell types or tissues"/>
</dbReference>
<dbReference type="GO" id="GO:0005737">
    <property type="term" value="C:cytoplasm"/>
    <property type="evidence" value="ECO:0000318"/>
    <property type="project" value="GO_Central"/>
</dbReference>
<dbReference type="GO" id="GO:0005802">
    <property type="term" value="C:trans-Golgi network"/>
    <property type="evidence" value="ECO:0000318"/>
    <property type="project" value="GO_Central"/>
</dbReference>
<dbReference type="GO" id="GO:0005525">
    <property type="term" value="F:GTP binding"/>
    <property type="evidence" value="ECO:0000318"/>
    <property type="project" value="GO_Central"/>
</dbReference>
<dbReference type="GO" id="GO:0003924">
    <property type="term" value="F:GTPase activity"/>
    <property type="evidence" value="ECO:0007669"/>
    <property type="project" value="InterPro"/>
</dbReference>
<dbReference type="GO" id="GO:0006886">
    <property type="term" value="P:intracellular protein transport"/>
    <property type="evidence" value="ECO:0000318"/>
    <property type="project" value="GO_Central"/>
</dbReference>
<dbReference type="GO" id="GO:1903292">
    <property type="term" value="P:protein localization to Golgi membrane"/>
    <property type="evidence" value="ECO:0000266"/>
    <property type="project" value="RGD"/>
</dbReference>
<dbReference type="GO" id="GO:0016192">
    <property type="term" value="P:vesicle-mediated transport"/>
    <property type="evidence" value="ECO:0000318"/>
    <property type="project" value="GO_Central"/>
</dbReference>
<dbReference type="CDD" id="cd04153">
    <property type="entry name" value="Arl5_Arl8"/>
    <property type="match status" value="1"/>
</dbReference>
<dbReference type="FunFam" id="3.40.50.300:FF:000294">
    <property type="entry name" value="ADP-ribosylation factor-like protein 5A"/>
    <property type="match status" value="1"/>
</dbReference>
<dbReference type="Gene3D" id="3.40.50.300">
    <property type="entry name" value="P-loop containing nucleotide triphosphate hydrolases"/>
    <property type="match status" value="1"/>
</dbReference>
<dbReference type="InterPro" id="IPR027417">
    <property type="entry name" value="P-loop_NTPase"/>
</dbReference>
<dbReference type="InterPro" id="IPR005225">
    <property type="entry name" value="Small_GTP-bd"/>
</dbReference>
<dbReference type="InterPro" id="IPR024156">
    <property type="entry name" value="Small_GTPase_ARF"/>
</dbReference>
<dbReference type="InterPro" id="IPR006689">
    <property type="entry name" value="Small_GTPase_ARF/SAR"/>
</dbReference>
<dbReference type="NCBIfam" id="TIGR00231">
    <property type="entry name" value="small_GTP"/>
    <property type="match status" value="1"/>
</dbReference>
<dbReference type="PANTHER" id="PTHR11711">
    <property type="entry name" value="ADP RIBOSYLATION FACTOR-RELATED"/>
    <property type="match status" value="1"/>
</dbReference>
<dbReference type="Pfam" id="PF00025">
    <property type="entry name" value="Arf"/>
    <property type="match status" value="1"/>
</dbReference>
<dbReference type="PRINTS" id="PR00328">
    <property type="entry name" value="SAR1GTPBP"/>
</dbReference>
<dbReference type="SMART" id="SM00177">
    <property type="entry name" value="ARF"/>
    <property type="match status" value="1"/>
</dbReference>
<dbReference type="SMART" id="SM00178">
    <property type="entry name" value="SAR"/>
    <property type="match status" value="1"/>
</dbReference>
<dbReference type="SUPFAM" id="SSF52540">
    <property type="entry name" value="P-loop containing nucleoside triphosphate hydrolases"/>
    <property type="match status" value="1"/>
</dbReference>
<dbReference type="PROSITE" id="PS51417">
    <property type="entry name" value="ARF"/>
    <property type="match status" value="1"/>
</dbReference>